<comment type="function">
    <text evidence="1">Produces ATP from ADP in the presence of a proton gradient across the membrane. The catalytic sites are hosted primarily by the beta subunits.</text>
</comment>
<comment type="catalytic activity">
    <reaction evidence="1">
        <text>ATP + H2O + 4 H(+)(in) = ADP + phosphate + 5 H(+)(out)</text>
        <dbReference type="Rhea" id="RHEA:57720"/>
        <dbReference type="ChEBI" id="CHEBI:15377"/>
        <dbReference type="ChEBI" id="CHEBI:15378"/>
        <dbReference type="ChEBI" id="CHEBI:30616"/>
        <dbReference type="ChEBI" id="CHEBI:43474"/>
        <dbReference type="ChEBI" id="CHEBI:456216"/>
        <dbReference type="EC" id="7.1.2.2"/>
    </reaction>
</comment>
<comment type="subunit">
    <text evidence="1">F-type ATPases have 2 components, CF(1) - the catalytic core - and CF(0) - the membrane proton channel. CF(1) has five subunits: alpha(3), beta(3), gamma(1), delta(1), epsilon(1). CF(0) has three main subunits: a(1), b(2) and c(9-12). The alpha and beta chains form an alternating ring which encloses part of the gamma chain. CF(1) is attached to CF(0) by a central stalk formed by the gamma and epsilon chains, while a peripheral stalk is formed by the delta and b chains.</text>
</comment>
<comment type="subcellular location">
    <subcellularLocation>
        <location evidence="1">Cell inner membrane</location>
        <topology evidence="1">Peripheral membrane protein</topology>
    </subcellularLocation>
</comment>
<comment type="similarity">
    <text evidence="1">Belongs to the ATPase alpha/beta chains family.</text>
</comment>
<feature type="chain" id="PRO_0000254297" description="ATP synthase subunit beta">
    <location>
        <begin position="1"/>
        <end position="519"/>
    </location>
</feature>
<feature type="region of interest" description="Disordered" evidence="2">
    <location>
        <begin position="1"/>
        <end position="40"/>
    </location>
</feature>
<feature type="compositionally biased region" description="Low complexity" evidence="2">
    <location>
        <begin position="1"/>
        <end position="26"/>
    </location>
</feature>
<feature type="binding site" evidence="1">
    <location>
        <begin position="197"/>
        <end position="204"/>
    </location>
    <ligand>
        <name>ATP</name>
        <dbReference type="ChEBI" id="CHEBI:30616"/>
    </ligand>
</feature>
<organism>
    <name type="scientific">Chelativorans sp. (strain BNC1)</name>
    <dbReference type="NCBI Taxonomy" id="266779"/>
    <lineage>
        <taxon>Bacteria</taxon>
        <taxon>Pseudomonadati</taxon>
        <taxon>Pseudomonadota</taxon>
        <taxon>Alphaproteobacteria</taxon>
        <taxon>Hyphomicrobiales</taxon>
        <taxon>Phyllobacteriaceae</taxon>
        <taxon>Chelativorans</taxon>
    </lineage>
</organism>
<protein>
    <recommendedName>
        <fullName evidence="1">ATP synthase subunit beta</fullName>
        <ecNumber evidence="1">7.1.2.2</ecNumber>
    </recommendedName>
    <alternativeName>
        <fullName evidence="1">ATP synthase F1 sector subunit beta</fullName>
    </alternativeName>
    <alternativeName>
        <fullName evidence="1">F-ATPase subunit beta</fullName>
    </alternativeName>
</protein>
<reference key="1">
    <citation type="submission" date="2006-06" db="EMBL/GenBank/DDBJ databases">
        <title>Complete sequence of chromosome of Mesorhizobium sp. BNC1.</title>
        <authorList>
            <consortium name="US DOE Joint Genome Institute"/>
            <person name="Copeland A."/>
            <person name="Lucas S."/>
            <person name="Lapidus A."/>
            <person name="Barry K."/>
            <person name="Detter J.C."/>
            <person name="Glavina del Rio T."/>
            <person name="Hammon N."/>
            <person name="Israni S."/>
            <person name="Dalin E."/>
            <person name="Tice H."/>
            <person name="Pitluck S."/>
            <person name="Chertkov O."/>
            <person name="Brettin T."/>
            <person name="Bruce D."/>
            <person name="Han C."/>
            <person name="Tapia R."/>
            <person name="Gilna P."/>
            <person name="Schmutz J."/>
            <person name="Larimer F."/>
            <person name="Land M."/>
            <person name="Hauser L."/>
            <person name="Kyrpides N."/>
            <person name="Mikhailova N."/>
            <person name="Richardson P."/>
        </authorList>
    </citation>
    <scope>NUCLEOTIDE SEQUENCE [LARGE SCALE GENOMIC DNA]</scope>
    <source>
        <strain>BNC1</strain>
    </source>
</reference>
<gene>
    <name evidence="1" type="primary">atpD</name>
    <name type="ordered locus">Meso_3218</name>
</gene>
<name>ATPB_CHESB</name>
<keyword id="KW-0066">ATP synthesis</keyword>
<keyword id="KW-0067">ATP-binding</keyword>
<keyword id="KW-0997">Cell inner membrane</keyword>
<keyword id="KW-1003">Cell membrane</keyword>
<keyword id="KW-0139">CF(1)</keyword>
<keyword id="KW-0375">Hydrogen ion transport</keyword>
<keyword id="KW-0406">Ion transport</keyword>
<keyword id="KW-0472">Membrane</keyword>
<keyword id="KW-0547">Nucleotide-binding</keyword>
<keyword id="KW-1278">Translocase</keyword>
<keyword id="KW-0813">Transport</keyword>
<dbReference type="EC" id="7.1.2.2" evidence="1"/>
<dbReference type="EMBL" id="CP000390">
    <property type="protein sequence ID" value="ABG64590.1"/>
    <property type="molecule type" value="Genomic_DNA"/>
</dbReference>
<dbReference type="SMR" id="Q11DD5"/>
<dbReference type="STRING" id="266779.Meso_3218"/>
<dbReference type="KEGG" id="mes:Meso_3218"/>
<dbReference type="eggNOG" id="COG0055">
    <property type="taxonomic scope" value="Bacteria"/>
</dbReference>
<dbReference type="HOGENOM" id="CLU_022398_0_2_5"/>
<dbReference type="GO" id="GO:0005886">
    <property type="term" value="C:plasma membrane"/>
    <property type="evidence" value="ECO:0007669"/>
    <property type="project" value="UniProtKB-SubCell"/>
</dbReference>
<dbReference type="GO" id="GO:0045259">
    <property type="term" value="C:proton-transporting ATP synthase complex"/>
    <property type="evidence" value="ECO:0007669"/>
    <property type="project" value="UniProtKB-KW"/>
</dbReference>
<dbReference type="GO" id="GO:0005524">
    <property type="term" value="F:ATP binding"/>
    <property type="evidence" value="ECO:0007669"/>
    <property type="project" value="UniProtKB-UniRule"/>
</dbReference>
<dbReference type="GO" id="GO:0016887">
    <property type="term" value="F:ATP hydrolysis activity"/>
    <property type="evidence" value="ECO:0007669"/>
    <property type="project" value="InterPro"/>
</dbReference>
<dbReference type="GO" id="GO:0046933">
    <property type="term" value="F:proton-transporting ATP synthase activity, rotational mechanism"/>
    <property type="evidence" value="ECO:0007669"/>
    <property type="project" value="UniProtKB-UniRule"/>
</dbReference>
<dbReference type="CDD" id="cd18110">
    <property type="entry name" value="ATP-synt_F1_beta_C"/>
    <property type="match status" value="1"/>
</dbReference>
<dbReference type="CDD" id="cd18115">
    <property type="entry name" value="ATP-synt_F1_beta_N"/>
    <property type="match status" value="1"/>
</dbReference>
<dbReference type="CDD" id="cd01133">
    <property type="entry name" value="F1-ATPase_beta_CD"/>
    <property type="match status" value="1"/>
</dbReference>
<dbReference type="FunFam" id="1.10.1140.10:FF:000001">
    <property type="entry name" value="ATP synthase subunit beta"/>
    <property type="match status" value="1"/>
</dbReference>
<dbReference type="FunFam" id="2.40.10.170:FF:000004">
    <property type="entry name" value="ATP synthase subunit beta"/>
    <property type="match status" value="1"/>
</dbReference>
<dbReference type="FunFam" id="3.40.50.300:FF:000026">
    <property type="entry name" value="ATP synthase subunit beta"/>
    <property type="match status" value="1"/>
</dbReference>
<dbReference type="Gene3D" id="2.40.10.170">
    <property type="match status" value="1"/>
</dbReference>
<dbReference type="Gene3D" id="1.10.1140.10">
    <property type="entry name" value="Bovine Mitochondrial F1-atpase, Atp Synthase Beta Chain, Chain D, domain 3"/>
    <property type="match status" value="1"/>
</dbReference>
<dbReference type="Gene3D" id="3.40.50.300">
    <property type="entry name" value="P-loop containing nucleotide triphosphate hydrolases"/>
    <property type="match status" value="1"/>
</dbReference>
<dbReference type="HAMAP" id="MF_01347">
    <property type="entry name" value="ATP_synth_beta_bact"/>
    <property type="match status" value="1"/>
</dbReference>
<dbReference type="InterPro" id="IPR003593">
    <property type="entry name" value="AAA+_ATPase"/>
</dbReference>
<dbReference type="InterPro" id="IPR055190">
    <property type="entry name" value="ATP-synt_VA_C"/>
</dbReference>
<dbReference type="InterPro" id="IPR005722">
    <property type="entry name" value="ATP_synth_F1_bsu"/>
</dbReference>
<dbReference type="InterPro" id="IPR020003">
    <property type="entry name" value="ATPase_a/bsu_AS"/>
</dbReference>
<dbReference type="InterPro" id="IPR050053">
    <property type="entry name" value="ATPase_alpha/beta_chains"/>
</dbReference>
<dbReference type="InterPro" id="IPR004100">
    <property type="entry name" value="ATPase_F1/V1/A1_a/bsu_N"/>
</dbReference>
<dbReference type="InterPro" id="IPR036121">
    <property type="entry name" value="ATPase_F1/V1/A1_a/bsu_N_sf"/>
</dbReference>
<dbReference type="InterPro" id="IPR000194">
    <property type="entry name" value="ATPase_F1/V1/A1_a/bsu_nucl-bd"/>
</dbReference>
<dbReference type="InterPro" id="IPR024034">
    <property type="entry name" value="ATPase_F1/V1_b/a_C"/>
</dbReference>
<dbReference type="InterPro" id="IPR027417">
    <property type="entry name" value="P-loop_NTPase"/>
</dbReference>
<dbReference type="NCBIfam" id="TIGR01039">
    <property type="entry name" value="atpD"/>
    <property type="match status" value="1"/>
</dbReference>
<dbReference type="PANTHER" id="PTHR15184">
    <property type="entry name" value="ATP SYNTHASE"/>
    <property type="match status" value="1"/>
</dbReference>
<dbReference type="PANTHER" id="PTHR15184:SF71">
    <property type="entry name" value="ATP SYNTHASE SUBUNIT BETA, MITOCHONDRIAL"/>
    <property type="match status" value="1"/>
</dbReference>
<dbReference type="Pfam" id="PF00006">
    <property type="entry name" value="ATP-synt_ab"/>
    <property type="match status" value="1"/>
</dbReference>
<dbReference type="Pfam" id="PF02874">
    <property type="entry name" value="ATP-synt_ab_N"/>
    <property type="match status" value="1"/>
</dbReference>
<dbReference type="Pfam" id="PF22919">
    <property type="entry name" value="ATP-synt_VA_C"/>
    <property type="match status" value="1"/>
</dbReference>
<dbReference type="PIRSF" id="PIRSF039072">
    <property type="entry name" value="ATPase_subunit_beta"/>
    <property type="match status" value="1"/>
</dbReference>
<dbReference type="SMART" id="SM00382">
    <property type="entry name" value="AAA"/>
    <property type="match status" value="1"/>
</dbReference>
<dbReference type="SUPFAM" id="SSF47917">
    <property type="entry name" value="C-terminal domain of alpha and beta subunits of F1 ATP synthase"/>
    <property type="match status" value="1"/>
</dbReference>
<dbReference type="SUPFAM" id="SSF50615">
    <property type="entry name" value="N-terminal domain of alpha and beta subunits of F1 ATP synthase"/>
    <property type="match status" value="1"/>
</dbReference>
<dbReference type="SUPFAM" id="SSF52540">
    <property type="entry name" value="P-loop containing nucleoside triphosphate hydrolases"/>
    <property type="match status" value="1"/>
</dbReference>
<dbReference type="PROSITE" id="PS00152">
    <property type="entry name" value="ATPASE_ALPHA_BETA"/>
    <property type="match status" value="1"/>
</dbReference>
<proteinExistence type="inferred from homology"/>
<evidence type="ECO:0000255" key="1">
    <source>
        <dbReference type="HAMAP-Rule" id="MF_01347"/>
    </source>
</evidence>
<evidence type="ECO:0000256" key="2">
    <source>
        <dbReference type="SAM" id="MobiDB-lite"/>
    </source>
</evidence>
<sequence>MAKAATPKRAPARAAAIPAAATPAAKPAKRASTRSAAARSPIAAATASGKIGSVRQVIGAVVDVQFQENLPAILNALETDNQGNRLVLEVAQHLGENTVRCIAMDSTDGLVRGQEVRDTGAPISVPVGPEMLGRIINVIGEPVDEAGPITATEFRGIHQPAPEYVEQSTEAQILVTGIKVLDLLAPYARGGKIGLFGGAGVGKTVLIQELINNVAKAHGGYSVFAGVGERTREGNDLYHEFIESGVNKKGGGEGSKAALVYGQMNEPPGARARVGLTGLTVAEYFRDQGQDVLFFVDNIFRFTQAGSEVSALLGRIPSAVGYQPTLATDMGALQERITTTTKGSITSVQAIYVPADDLTDPAPATSFAHLDATTVLSRAISEKGIYPAVDPLDSTSRMLDPQIVGEEHYQVARAVQQTLQRYKSLQDIIAILGMDELSEEDKLTVARARKIERFLSQPFFVAEVFTGSPGKLVDLQDTIKGFKGLVEGEYDHLPEAAFYMVGTIEDAIEKAERLAAEAA</sequence>
<accession>Q11DD5</accession>